<dbReference type="EMBL" id="AF036098">
    <property type="protein sequence ID" value="AAB88823.1"/>
    <property type="molecule type" value="mRNA"/>
</dbReference>
<dbReference type="EMBL" id="AF105969">
    <property type="protein sequence ID" value="AAF63406.1"/>
    <property type="molecule type" value="mRNA"/>
</dbReference>
<dbReference type="EMBL" id="AY253330">
    <property type="protein sequence ID" value="AAP05997.1"/>
    <property type="molecule type" value="mRNA"/>
</dbReference>
<dbReference type="EMBL" id="AY253331">
    <property type="protein sequence ID" value="AAP05998.1"/>
    <property type="molecule type" value="mRNA"/>
</dbReference>
<dbReference type="SMR" id="O44126"/>
<dbReference type="Proteomes" id="UP000025227">
    <property type="component" value="Unplaced"/>
</dbReference>
<dbReference type="GO" id="GO:0016020">
    <property type="term" value="C:membrane"/>
    <property type="evidence" value="ECO:0007669"/>
    <property type="project" value="UniProtKB-SubCell"/>
</dbReference>
<dbReference type="GO" id="GO:0030246">
    <property type="term" value="F:carbohydrate binding"/>
    <property type="evidence" value="ECO:0007669"/>
    <property type="project" value="UniProtKB-KW"/>
</dbReference>
<dbReference type="GO" id="GO:0016936">
    <property type="term" value="F:galactoside binding"/>
    <property type="evidence" value="ECO:0007669"/>
    <property type="project" value="TreeGrafter"/>
</dbReference>
<dbReference type="GO" id="GO:0032945">
    <property type="term" value="P:negative regulation of mononuclear cell proliferation"/>
    <property type="evidence" value="ECO:0000314"/>
    <property type="project" value="UniProtKB"/>
</dbReference>
<dbReference type="GO" id="GO:0045019">
    <property type="term" value="P:negative regulation of nitric oxide biosynthetic process"/>
    <property type="evidence" value="ECO:0000314"/>
    <property type="project" value="UniProtKB"/>
</dbReference>
<dbReference type="GO" id="GO:0043065">
    <property type="term" value="P:positive regulation of apoptotic process"/>
    <property type="evidence" value="ECO:0000314"/>
    <property type="project" value="UniProtKB"/>
</dbReference>
<dbReference type="GO" id="GO:0042981">
    <property type="term" value="P:regulation of apoptotic process"/>
    <property type="evidence" value="ECO:0000315"/>
    <property type="project" value="UniProtKB"/>
</dbReference>
<dbReference type="GO" id="GO:0001817">
    <property type="term" value="P:regulation of cytokine production"/>
    <property type="evidence" value="ECO:0000314"/>
    <property type="project" value="UniProtKB"/>
</dbReference>
<dbReference type="GO" id="GO:0032944">
    <property type="term" value="P:regulation of mononuclear cell proliferation"/>
    <property type="evidence" value="ECO:0000315"/>
    <property type="project" value="UniProtKB"/>
</dbReference>
<dbReference type="GO" id="GO:0045428">
    <property type="term" value="P:regulation of nitric oxide biosynthetic process"/>
    <property type="evidence" value="ECO:0000315"/>
    <property type="project" value="UniProtKB"/>
</dbReference>
<dbReference type="GO" id="GO:0050764">
    <property type="term" value="P:regulation of phagocytosis"/>
    <property type="evidence" value="ECO:0000315"/>
    <property type="project" value="UniProtKB"/>
</dbReference>
<dbReference type="CDD" id="cd00070">
    <property type="entry name" value="GLECT"/>
    <property type="match status" value="2"/>
</dbReference>
<dbReference type="FunFam" id="2.60.120.200:FF:000145">
    <property type="entry name" value="Galectin"/>
    <property type="match status" value="1"/>
</dbReference>
<dbReference type="FunFam" id="2.60.120.200:FF:000155">
    <property type="entry name" value="Galectin"/>
    <property type="match status" value="1"/>
</dbReference>
<dbReference type="Gene3D" id="2.60.120.200">
    <property type="match status" value="2"/>
</dbReference>
<dbReference type="InterPro" id="IPR013320">
    <property type="entry name" value="ConA-like_dom_sf"/>
</dbReference>
<dbReference type="InterPro" id="IPR044156">
    <property type="entry name" value="Galectin-like"/>
</dbReference>
<dbReference type="InterPro" id="IPR001079">
    <property type="entry name" value="Galectin_CRD"/>
</dbReference>
<dbReference type="PANTHER" id="PTHR11346:SF176">
    <property type="entry name" value="32 KDA BETA-GALACTOSIDE-BINDING LECTIN LEC-3"/>
    <property type="match status" value="1"/>
</dbReference>
<dbReference type="PANTHER" id="PTHR11346">
    <property type="entry name" value="GALECTIN"/>
    <property type="match status" value="1"/>
</dbReference>
<dbReference type="Pfam" id="PF00337">
    <property type="entry name" value="Gal-bind_lectin"/>
    <property type="match status" value="2"/>
</dbReference>
<dbReference type="SMART" id="SM00908">
    <property type="entry name" value="Gal-bind_lectin"/>
    <property type="match status" value="2"/>
</dbReference>
<dbReference type="SMART" id="SM00276">
    <property type="entry name" value="GLECT"/>
    <property type="match status" value="2"/>
</dbReference>
<dbReference type="SUPFAM" id="SSF49899">
    <property type="entry name" value="Concanavalin A-like lectins/glucanases"/>
    <property type="match status" value="2"/>
</dbReference>
<dbReference type="PROSITE" id="PS51304">
    <property type="entry name" value="GALECTIN"/>
    <property type="match status" value="2"/>
</dbReference>
<gene>
    <name type="primary">GAL-1</name>
    <name evidence="8" type="synonym">Hco-gal-3b</name>
</gene>
<keyword id="KW-0430">Lectin</keyword>
<keyword id="KW-0472">Membrane</keyword>
<keyword id="KW-0677">Repeat</keyword>
<evidence type="ECO:0000250" key="1"/>
<evidence type="ECO:0000255" key="2">
    <source>
        <dbReference type="PROSITE-ProRule" id="PRU00639"/>
    </source>
</evidence>
<evidence type="ECO:0000269" key="3">
    <source>
    </source>
</evidence>
<evidence type="ECO:0000269" key="4">
    <source>
    </source>
</evidence>
<evidence type="ECO:0000269" key="5">
    <source>
    </source>
</evidence>
<evidence type="ECO:0000269" key="6">
    <source>
    </source>
</evidence>
<evidence type="ECO:0000269" key="7">
    <source>
    </source>
</evidence>
<evidence type="ECO:0000303" key="8">
    <source>
    </source>
</evidence>
<evidence type="ECO:0000305" key="9"/>
<name>LEG1_HAECO</name>
<feature type="chain" id="PRO_0000076959" description="32 kDa beta-galactoside-binding lectin">
    <location>
        <begin position="1"/>
        <end position="283"/>
    </location>
</feature>
<feature type="domain" description="Galectin 1" evidence="2">
    <location>
        <begin position="17"/>
        <end position="148"/>
    </location>
</feature>
<feature type="domain" description="Galectin 2" evidence="2">
    <location>
        <begin position="156"/>
        <end position="283"/>
    </location>
</feature>
<feature type="binding site" evidence="1">
    <location>
        <begin position="217"/>
        <end position="223"/>
    </location>
    <ligand>
        <name>a beta-D-galactoside</name>
        <dbReference type="ChEBI" id="CHEBI:28034"/>
    </ligand>
</feature>
<feature type="sequence conflict" description="In Ref. 2; AAF63406 and 3; AAP05997/AAP05998." evidence="9" ref="2 3">
    <original>V</original>
    <variation>I</variation>
    <location>
        <position position="73"/>
    </location>
</feature>
<feature type="sequence conflict" description="In Ref. 3; AAP05998." evidence="9" ref="3">
    <original>E</original>
    <variation>G</variation>
    <location>
        <position position="221"/>
    </location>
</feature>
<feature type="sequence conflict" description="In Ref. 3; AAP05998." evidence="9" ref="3">
    <original>V</original>
    <variation>E</variation>
    <location>
        <position position="249"/>
    </location>
</feature>
<reference key="1">
    <citation type="journal article" date="1999" name="Parasitology">
        <title>Cloning and characterization of a beta-galactoside-binding protein (galectin) from the gut of the gastrointestinal nematode parasite Haemonchus contortus.</title>
        <authorList>
            <person name="Newlands G.F.J."/>
            <person name="Skuce P.J."/>
            <person name="Knox D.P."/>
            <person name="Smith S.K."/>
            <person name="Smith W.D."/>
        </authorList>
    </citation>
    <scope>NUCLEOTIDE SEQUENCE [MRNA]</scope>
    <scope>SUBCELLULAR LOCATION</scope>
    <source>
        <strain>Moredun</strain>
        <tissue>Gut</tissue>
    </source>
</reference>
<reference key="2">
    <citation type="journal article" date="2000" name="Mol. Biochem. Parasitol.">
        <title>A family of galectins from Haemonchus contortus.</title>
        <authorList>
            <person name="Greenhalgh C.J."/>
            <person name="Loukas A."/>
            <person name="Donald D."/>
            <person name="Nikolaou S."/>
            <person name="Newton S.E."/>
        </authorList>
    </citation>
    <scope>NUCLEOTIDE SEQUENCE [MRNA]</scope>
</reference>
<reference key="3">
    <citation type="journal article" date="2007" name="Vet. Parasitol.">
        <title>Recombinant galectins of male and female Haemonchus contortus do not hemagglutinate erythrocytes of their natural host.</title>
        <authorList>
            <person name="Li C."/>
            <person name="Wei X."/>
            <person name="Xu L."/>
            <person name="Li X."/>
        </authorList>
    </citation>
    <scope>NUCLEOTIDE SEQUENCE [MRNA]</scope>
    <scope>FUNCTION</scope>
</reference>
<reference key="4">
    <citation type="journal article" date="2015" name="Parasit. Vectors">
        <title>Transmembrane protein 63A is a partner protein of Haemonchus contortus galectin in the regulation of goat peripheral blood mononuclear cells.</title>
        <authorList>
            <person name="Yuan C."/>
            <person name="Zhang H."/>
            <person name="Wang W."/>
            <person name="Li Y."/>
            <person name="Yan R."/>
            <person name="Xu L."/>
            <person name="Song X."/>
            <person name="Li X."/>
        </authorList>
    </citation>
    <scope>FUNCTION</scope>
    <scope>INTERACTION WITH GOAT TMEM63A</scope>
</reference>
<reference key="5">
    <citation type="journal article" date="2016" name="Parasit. Vectors">
        <title>Transmembrane protein 147 (TMEM147): another partner protein of Haemonchus contortus galectin on the goat peripheral blood mononuclear cells (PBMC).</title>
        <authorList>
            <person name="Li Y."/>
            <person name="Yuan C."/>
            <person name="Wang L."/>
            <person name="Lu M."/>
            <person name="Wang Y."/>
            <person name="Wen Y."/>
            <person name="Yan R."/>
            <person name="Xu L."/>
            <person name="Song X."/>
            <person name="Li X."/>
        </authorList>
    </citation>
    <scope>FUNCTION</scope>
    <scope>INTERACTION WITH GOAT TMEM147</scope>
</reference>
<reference key="6">
    <citation type="journal article" date="2017" name="Parasit. Vectors">
        <title>The N- and C-terminal carbohydrate recognition domains of Haemonchus contortus galectin bind to distinct receptors of goat PBMC and contribute differently to its immunomodulatory functions in host-parasite interactions.</title>
        <authorList>
            <person name="Lu M."/>
            <person name="Tian X."/>
            <person name="Yang X."/>
            <person name="Yuan C."/>
            <person name="Ehsan M."/>
            <person name="Liu X."/>
            <person name="Yan R."/>
            <person name="Xu L."/>
            <person name="Song X."/>
            <person name="Li X."/>
        </authorList>
    </citation>
    <scope>FUNCTION</scope>
    <scope>INTERACTION WITH GOAT TMEM63A AND GOAT TMEM147</scope>
</reference>
<comment type="function">
    <text evidence="4 5 6 7">Binds galactose. Exerts immunomodulatory effects on host peripheral blood mononuclear cells to down-regulate host immune response (PubMed:25879191, PubMed:27337943, PubMed:28870237). Hemagglutinates human, dog, rabbit, chicken and mouse erythrocytes but does not hemagglutinate the erythrocytes of goat, its natural host (PubMed:17125929).</text>
</comment>
<comment type="subunit">
    <text evidence="5 6 7">(Microbial infection) Interacts (via domain galectin 2) with goat TMEM147 (PubMed:27337943, PubMed:28870237). Interacts (via domain galectin 1) with goat TMEM63A (PubMed:25879191, PubMed:28870237).</text>
</comment>
<comment type="subcellular location">
    <subcellularLocation>
        <location evidence="3">Membrane</location>
    </subcellularLocation>
</comment>
<accession>O44126</accession>
<accession>Q86FX2</accession>
<accession>Q9NJV0</accession>
<proteinExistence type="evidence at protein level"/>
<sequence>MVSQFLHWYEYNKPVPYRSLLQEKIEPGQTLIVKGSTIDESQRFTINLHSKSADFSGNDVPLHISVRFDEGKVVMNTFANGEWGKEERKSLPIKKGDSFDIRIRAHDDRFQIVIDQKEFKDYEHRLPLTSITHLSIDGDLYLNHVHWGGKYYPVPYESGIASGFPIDKTLLIFGTVEKKAKRFNINLLRRNGDIALHFNPRFDEKAVIRNALAANEWGNEEREGKMPFEKGVGFDLAIKNEAYAFQIFVNGERFTSFAHRQDPNDISGLQIQGDIELTGIQIQ</sequence>
<organism>
    <name type="scientific">Haemonchus contortus</name>
    <name type="common">Barber pole worm</name>
    <dbReference type="NCBI Taxonomy" id="6289"/>
    <lineage>
        <taxon>Eukaryota</taxon>
        <taxon>Metazoa</taxon>
        <taxon>Ecdysozoa</taxon>
        <taxon>Nematoda</taxon>
        <taxon>Chromadorea</taxon>
        <taxon>Rhabditida</taxon>
        <taxon>Rhabditina</taxon>
        <taxon>Rhabditomorpha</taxon>
        <taxon>Strongyloidea</taxon>
        <taxon>Trichostrongylidae</taxon>
        <taxon>Haemonchus</taxon>
    </lineage>
</organism>
<protein>
    <recommendedName>
        <fullName>32 kDa beta-galactoside-binding lectin</fullName>
    </recommendedName>
    <alternativeName>
        <fullName>Galectin-1</fullName>
    </alternativeName>
</protein>